<gene>
    <name evidence="1" type="primary">groEL1</name>
    <name evidence="1" type="synonym">groL1</name>
    <name type="ordered locus">BURPS1710b_3175</name>
</gene>
<dbReference type="EC" id="5.6.1.7" evidence="1"/>
<dbReference type="EMBL" id="CP000124">
    <property type="protein sequence ID" value="ABA50320.1"/>
    <property type="molecule type" value="Genomic_DNA"/>
</dbReference>
<dbReference type="SMR" id="Q3JPF6"/>
<dbReference type="EnsemblBacteria" id="ABA50320">
    <property type="protein sequence ID" value="ABA50320"/>
    <property type="gene ID" value="BURPS1710b_3175"/>
</dbReference>
<dbReference type="KEGG" id="bpm:BURPS1710b_3175"/>
<dbReference type="HOGENOM" id="CLU_016503_3_0_4"/>
<dbReference type="Proteomes" id="UP000002700">
    <property type="component" value="Chromosome I"/>
</dbReference>
<dbReference type="GO" id="GO:0005737">
    <property type="term" value="C:cytoplasm"/>
    <property type="evidence" value="ECO:0007669"/>
    <property type="project" value="UniProtKB-SubCell"/>
</dbReference>
<dbReference type="GO" id="GO:0005524">
    <property type="term" value="F:ATP binding"/>
    <property type="evidence" value="ECO:0007669"/>
    <property type="project" value="UniProtKB-UniRule"/>
</dbReference>
<dbReference type="GO" id="GO:0140662">
    <property type="term" value="F:ATP-dependent protein folding chaperone"/>
    <property type="evidence" value="ECO:0007669"/>
    <property type="project" value="InterPro"/>
</dbReference>
<dbReference type="GO" id="GO:0016853">
    <property type="term" value="F:isomerase activity"/>
    <property type="evidence" value="ECO:0007669"/>
    <property type="project" value="UniProtKB-KW"/>
</dbReference>
<dbReference type="GO" id="GO:0051082">
    <property type="term" value="F:unfolded protein binding"/>
    <property type="evidence" value="ECO:0007669"/>
    <property type="project" value="UniProtKB-UniRule"/>
</dbReference>
<dbReference type="GO" id="GO:0042026">
    <property type="term" value="P:protein refolding"/>
    <property type="evidence" value="ECO:0007669"/>
    <property type="project" value="UniProtKB-UniRule"/>
</dbReference>
<dbReference type="CDD" id="cd03344">
    <property type="entry name" value="GroEL"/>
    <property type="match status" value="1"/>
</dbReference>
<dbReference type="FunFam" id="1.10.560.10:FF:000001">
    <property type="entry name" value="60 kDa chaperonin"/>
    <property type="match status" value="1"/>
</dbReference>
<dbReference type="FunFam" id="3.50.7.10:FF:000001">
    <property type="entry name" value="60 kDa chaperonin"/>
    <property type="match status" value="1"/>
</dbReference>
<dbReference type="Gene3D" id="3.50.7.10">
    <property type="entry name" value="GroEL"/>
    <property type="match status" value="1"/>
</dbReference>
<dbReference type="Gene3D" id="1.10.560.10">
    <property type="entry name" value="GroEL-like equatorial domain"/>
    <property type="match status" value="1"/>
</dbReference>
<dbReference type="Gene3D" id="3.30.260.10">
    <property type="entry name" value="TCP-1-like chaperonin intermediate domain"/>
    <property type="match status" value="1"/>
</dbReference>
<dbReference type="HAMAP" id="MF_00600">
    <property type="entry name" value="CH60"/>
    <property type="match status" value="1"/>
</dbReference>
<dbReference type="InterPro" id="IPR018370">
    <property type="entry name" value="Chaperonin_Cpn60_CS"/>
</dbReference>
<dbReference type="InterPro" id="IPR001844">
    <property type="entry name" value="Cpn60/GroEL"/>
</dbReference>
<dbReference type="InterPro" id="IPR002423">
    <property type="entry name" value="Cpn60/GroEL/TCP-1"/>
</dbReference>
<dbReference type="InterPro" id="IPR027409">
    <property type="entry name" value="GroEL-like_apical_dom_sf"/>
</dbReference>
<dbReference type="InterPro" id="IPR027413">
    <property type="entry name" value="GROEL-like_equatorial_sf"/>
</dbReference>
<dbReference type="InterPro" id="IPR027410">
    <property type="entry name" value="TCP-1-like_intermed_sf"/>
</dbReference>
<dbReference type="NCBIfam" id="TIGR02348">
    <property type="entry name" value="GroEL"/>
    <property type="match status" value="1"/>
</dbReference>
<dbReference type="NCBIfam" id="NF000592">
    <property type="entry name" value="PRK00013.1"/>
    <property type="match status" value="1"/>
</dbReference>
<dbReference type="NCBIfam" id="NF009487">
    <property type="entry name" value="PRK12849.1"/>
    <property type="match status" value="1"/>
</dbReference>
<dbReference type="NCBIfam" id="NF009488">
    <property type="entry name" value="PRK12850.1"/>
    <property type="match status" value="1"/>
</dbReference>
<dbReference type="NCBIfam" id="NF009489">
    <property type="entry name" value="PRK12851.1"/>
    <property type="match status" value="1"/>
</dbReference>
<dbReference type="PANTHER" id="PTHR45633">
    <property type="entry name" value="60 KDA HEAT SHOCK PROTEIN, MITOCHONDRIAL"/>
    <property type="match status" value="1"/>
</dbReference>
<dbReference type="Pfam" id="PF00118">
    <property type="entry name" value="Cpn60_TCP1"/>
    <property type="match status" value="1"/>
</dbReference>
<dbReference type="PRINTS" id="PR00298">
    <property type="entry name" value="CHAPERONIN60"/>
</dbReference>
<dbReference type="SUPFAM" id="SSF52029">
    <property type="entry name" value="GroEL apical domain-like"/>
    <property type="match status" value="1"/>
</dbReference>
<dbReference type="SUPFAM" id="SSF48592">
    <property type="entry name" value="GroEL equatorial domain-like"/>
    <property type="match status" value="1"/>
</dbReference>
<dbReference type="SUPFAM" id="SSF54849">
    <property type="entry name" value="GroEL-intermediate domain like"/>
    <property type="match status" value="1"/>
</dbReference>
<dbReference type="PROSITE" id="PS00296">
    <property type="entry name" value="CHAPERONINS_CPN60"/>
    <property type="match status" value="1"/>
</dbReference>
<sequence length="546" mass="57146">MAAKDVVFGDSARAKMVEGVNILANAVKVTLGPKGRNVVLERSFGGPTVTKDGVSVAKEIELKDKLQNMGAQMVKEVASKTSDNAGDGTTTATVLAQSIVREGMKYVASGMNPMDLKRGIDKAVAAAVEELKKISKPCTTNKEIAQVGAISANSDSSIGDRIAEAMDKVGKEGVITVEDGKSLADELDVVEGMQFDRGYLSPYFINNPDKQVAVLENPFVLLHDKKVSNIRDLLPVLEQVAKAGRPLLIIAEDVEGEALATLVVNNIRGILKTVAVKAPGFGDRRKAMLEDIAILTGGQVIAEETGLTLEKATLAELGQAKRIEVGKENTTIIDGAGEAVNIEARVKQIRTQIEEATSDYDREKLQERVAKLAGGVAVIKVGAATEVEMKEKKARVEDALHATRAAVEEGIVPGGGVALIRARTAIASLTGVNADQNAGIKIVLRAMEEPLRQIVTNGGEEASVVVAAVAAGKGNYGYNAATGEYVDMVEAGVVDPTKVTRTALQNAASVAGLLLTTDAAVAELPKEDAPMPGGMPGGMGGMGMDM</sequence>
<feature type="chain" id="PRO_0000256881" description="Chaperonin GroEL 1">
    <location>
        <begin position="1"/>
        <end position="546"/>
    </location>
</feature>
<feature type="region of interest" description="Disordered" evidence="2">
    <location>
        <begin position="526"/>
        <end position="546"/>
    </location>
</feature>
<feature type="compositionally biased region" description="Gly residues" evidence="2">
    <location>
        <begin position="534"/>
        <end position="546"/>
    </location>
</feature>
<feature type="binding site" evidence="1">
    <location>
        <begin position="30"/>
        <end position="33"/>
    </location>
    <ligand>
        <name>ATP</name>
        <dbReference type="ChEBI" id="CHEBI:30616"/>
    </ligand>
</feature>
<feature type="binding site" evidence="1">
    <location>
        <position position="51"/>
    </location>
    <ligand>
        <name>ATP</name>
        <dbReference type="ChEBI" id="CHEBI:30616"/>
    </ligand>
</feature>
<feature type="binding site" evidence="1">
    <location>
        <begin position="87"/>
        <end position="91"/>
    </location>
    <ligand>
        <name>ATP</name>
        <dbReference type="ChEBI" id="CHEBI:30616"/>
    </ligand>
</feature>
<feature type="binding site" evidence="1">
    <location>
        <position position="415"/>
    </location>
    <ligand>
        <name>ATP</name>
        <dbReference type="ChEBI" id="CHEBI:30616"/>
    </ligand>
</feature>
<feature type="binding site" evidence="1">
    <location>
        <begin position="479"/>
        <end position="481"/>
    </location>
    <ligand>
        <name>ATP</name>
        <dbReference type="ChEBI" id="CHEBI:30616"/>
    </ligand>
</feature>
<feature type="binding site" evidence="1">
    <location>
        <position position="495"/>
    </location>
    <ligand>
        <name>ATP</name>
        <dbReference type="ChEBI" id="CHEBI:30616"/>
    </ligand>
</feature>
<name>CH601_BURP1</name>
<organism>
    <name type="scientific">Burkholderia pseudomallei (strain 1710b)</name>
    <dbReference type="NCBI Taxonomy" id="320372"/>
    <lineage>
        <taxon>Bacteria</taxon>
        <taxon>Pseudomonadati</taxon>
        <taxon>Pseudomonadota</taxon>
        <taxon>Betaproteobacteria</taxon>
        <taxon>Burkholderiales</taxon>
        <taxon>Burkholderiaceae</taxon>
        <taxon>Burkholderia</taxon>
        <taxon>pseudomallei group</taxon>
    </lineage>
</organism>
<reference key="1">
    <citation type="journal article" date="2010" name="Genome Biol. Evol.">
        <title>Continuing evolution of Burkholderia mallei through genome reduction and large-scale rearrangements.</title>
        <authorList>
            <person name="Losada L."/>
            <person name="Ronning C.M."/>
            <person name="DeShazer D."/>
            <person name="Woods D."/>
            <person name="Fedorova N."/>
            <person name="Kim H.S."/>
            <person name="Shabalina S.A."/>
            <person name="Pearson T.R."/>
            <person name="Brinkac L."/>
            <person name="Tan P."/>
            <person name="Nandi T."/>
            <person name="Crabtree J."/>
            <person name="Badger J."/>
            <person name="Beckstrom-Sternberg S."/>
            <person name="Saqib M."/>
            <person name="Schutzer S.E."/>
            <person name="Keim P."/>
            <person name="Nierman W.C."/>
        </authorList>
    </citation>
    <scope>NUCLEOTIDE SEQUENCE [LARGE SCALE GENOMIC DNA]</scope>
    <source>
        <strain>1710b</strain>
    </source>
</reference>
<comment type="function">
    <text evidence="1">Together with its co-chaperonin GroES, plays an essential role in assisting protein folding. The GroEL-GroES system forms a nano-cage that allows encapsulation of the non-native substrate proteins and provides a physical environment optimized to promote and accelerate protein folding.</text>
</comment>
<comment type="catalytic activity">
    <reaction evidence="1">
        <text>ATP + H2O + a folded polypeptide = ADP + phosphate + an unfolded polypeptide.</text>
        <dbReference type="EC" id="5.6.1.7"/>
    </reaction>
</comment>
<comment type="subunit">
    <text evidence="1">Forms a cylinder of 14 subunits composed of two heptameric rings stacked back-to-back. Interacts with the co-chaperonin GroES.</text>
</comment>
<comment type="subcellular location">
    <subcellularLocation>
        <location evidence="1">Cytoplasm</location>
    </subcellularLocation>
</comment>
<comment type="similarity">
    <text evidence="1">Belongs to the chaperonin (HSP60) family.</text>
</comment>
<keyword id="KW-0067">ATP-binding</keyword>
<keyword id="KW-0143">Chaperone</keyword>
<keyword id="KW-0963">Cytoplasm</keyword>
<keyword id="KW-0413">Isomerase</keyword>
<keyword id="KW-0547">Nucleotide-binding</keyword>
<accession>Q3JPF6</accession>
<proteinExistence type="inferred from homology"/>
<evidence type="ECO:0000255" key="1">
    <source>
        <dbReference type="HAMAP-Rule" id="MF_00600"/>
    </source>
</evidence>
<evidence type="ECO:0000256" key="2">
    <source>
        <dbReference type="SAM" id="MobiDB-lite"/>
    </source>
</evidence>
<protein>
    <recommendedName>
        <fullName evidence="1">Chaperonin GroEL 1</fullName>
        <ecNumber evidence="1">5.6.1.7</ecNumber>
    </recommendedName>
    <alternativeName>
        <fullName evidence="1">60 kDa chaperonin 1</fullName>
    </alternativeName>
    <alternativeName>
        <fullName evidence="1">Chaperonin-60 1</fullName>
        <shortName evidence="1">Cpn60 1</shortName>
    </alternativeName>
</protein>